<sequence length="229" mass="24564">MGKKYIESSKLIDKSALYNSTEALDLTVKTAKANFDETIELHVRLGVDPRHADQQVRGAVVLPNGTGKTVRVLVFAKGDKATEAQEAGADFVGAEDLVQKIQSENWFDYDVVVATPDMMGVVGRIGRVLGPKGLMPNPKSGTVTFDVAKAIAEIKAGKVEYRVDKTSIVHCPIGKKSFGTEKLKENFTTLMEALVKAKPAAAKGQYLKSITVSSTMGPGAKINPTKALD</sequence>
<comment type="function">
    <text evidence="1">Binds directly to 23S rRNA. The L1 stalk is quite mobile in the ribosome, and is involved in E site tRNA release.</text>
</comment>
<comment type="function">
    <text evidence="1">Protein L1 is also a translational repressor protein, it controls the translation of the L11 operon by binding to its mRNA.</text>
</comment>
<comment type="subunit">
    <text evidence="1">Part of the 50S ribosomal subunit.</text>
</comment>
<comment type="similarity">
    <text evidence="1">Belongs to the universal ribosomal protein uL1 family.</text>
</comment>
<evidence type="ECO:0000255" key="1">
    <source>
        <dbReference type="HAMAP-Rule" id="MF_01318"/>
    </source>
</evidence>
<evidence type="ECO:0000305" key="2"/>
<gene>
    <name evidence="1" type="primary">rplA</name>
    <name type="ordered locus">CLH_0227</name>
</gene>
<proteinExistence type="inferred from homology"/>
<feature type="chain" id="PRO_1000141379" description="Large ribosomal subunit protein uL1">
    <location>
        <begin position="1"/>
        <end position="229"/>
    </location>
</feature>
<reference key="1">
    <citation type="submission" date="2008-05" db="EMBL/GenBank/DDBJ databases">
        <title>Complete genome sequence of Clostridium botulinum E3 str. Alaska E43.</title>
        <authorList>
            <person name="Brinkac L.M."/>
            <person name="Brown J.L."/>
            <person name="Bruce D."/>
            <person name="Detter C."/>
            <person name="Munk C."/>
            <person name="Smith L.A."/>
            <person name="Smith T.J."/>
            <person name="Sutton G."/>
            <person name="Brettin T.S."/>
        </authorList>
    </citation>
    <scope>NUCLEOTIDE SEQUENCE [LARGE SCALE GENOMIC DNA]</scope>
    <source>
        <strain>Alaska E43 / Type E3</strain>
    </source>
</reference>
<keyword id="KW-0678">Repressor</keyword>
<keyword id="KW-0687">Ribonucleoprotein</keyword>
<keyword id="KW-0689">Ribosomal protein</keyword>
<keyword id="KW-0694">RNA-binding</keyword>
<keyword id="KW-0699">rRNA-binding</keyword>
<keyword id="KW-0810">Translation regulation</keyword>
<keyword id="KW-0820">tRNA-binding</keyword>
<name>RL1_CLOBA</name>
<organism>
    <name type="scientific">Clostridium botulinum (strain Alaska E43 / Type E3)</name>
    <dbReference type="NCBI Taxonomy" id="508767"/>
    <lineage>
        <taxon>Bacteria</taxon>
        <taxon>Bacillati</taxon>
        <taxon>Bacillota</taxon>
        <taxon>Clostridia</taxon>
        <taxon>Eubacteriales</taxon>
        <taxon>Clostridiaceae</taxon>
        <taxon>Clostridium</taxon>
    </lineage>
</organism>
<protein>
    <recommendedName>
        <fullName evidence="1">Large ribosomal subunit protein uL1</fullName>
    </recommendedName>
    <alternativeName>
        <fullName evidence="2">50S ribosomal protein L1</fullName>
    </alternativeName>
</protein>
<accession>B2UYA0</accession>
<dbReference type="EMBL" id="CP001078">
    <property type="protein sequence ID" value="ACD51119.1"/>
    <property type="molecule type" value="Genomic_DNA"/>
</dbReference>
<dbReference type="RefSeq" id="WP_012423549.1">
    <property type="nucleotide sequence ID" value="NC_010723.1"/>
</dbReference>
<dbReference type="SMR" id="B2UYA0"/>
<dbReference type="KEGG" id="cbt:CLH_0227"/>
<dbReference type="HOGENOM" id="CLU_062853_0_0_9"/>
<dbReference type="GO" id="GO:0015934">
    <property type="term" value="C:large ribosomal subunit"/>
    <property type="evidence" value="ECO:0007669"/>
    <property type="project" value="InterPro"/>
</dbReference>
<dbReference type="GO" id="GO:0019843">
    <property type="term" value="F:rRNA binding"/>
    <property type="evidence" value="ECO:0007669"/>
    <property type="project" value="UniProtKB-UniRule"/>
</dbReference>
<dbReference type="GO" id="GO:0003735">
    <property type="term" value="F:structural constituent of ribosome"/>
    <property type="evidence" value="ECO:0007669"/>
    <property type="project" value="InterPro"/>
</dbReference>
<dbReference type="GO" id="GO:0000049">
    <property type="term" value="F:tRNA binding"/>
    <property type="evidence" value="ECO:0007669"/>
    <property type="project" value="UniProtKB-KW"/>
</dbReference>
<dbReference type="GO" id="GO:0006417">
    <property type="term" value="P:regulation of translation"/>
    <property type="evidence" value="ECO:0007669"/>
    <property type="project" value="UniProtKB-KW"/>
</dbReference>
<dbReference type="GO" id="GO:0006412">
    <property type="term" value="P:translation"/>
    <property type="evidence" value="ECO:0007669"/>
    <property type="project" value="UniProtKB-UniRule"/>
</dbReference>
<dbReference type="CDD" id="cd00403">
    <property type="entry name" value="Ribosomal_L1"/>
    <property type="match status" value="1"/>
</dbReference>
<dbReference type="FunFam" id="3.40.50.790:FF:000001">
    <property type="entry name" value="50S ribosomal protein L1"/>
    <property type="match status" value="1"/>
</dbReference>
<dbReference type="Gene3D" id="3.30.190.20">
    <property type="match status" value="1"/>
</dbReference>
<dbReference type="Gene3D" id="3.40.50.790">
    <property type="match status" value="1"/>
</dbReference>
<dbReference type="HAMAP" id="MF_01318_B">
    <property type="entry name" value="Ribosomal_uL1_B"/>
    <property type="match status" value="1"/>
</dbReference>
<dbReference type="InterPro" id="IPR005878">
    <property type="entry name" value="Ribosom_uL1_bac-type"/>
</dbReference>
<dbReference type="InterPro" id="IPR002143">
    <property type="entry name" value="Ribosomal_uL1"/>
</dbReference>
<dbReference type="InterPro" id="IPR023674">
    <property type="entry name" value="Ribosomal_uL1-like"/>
</dbReference>
<dbReference type="InterPro" id="IPR028364">
    <property type="entry name" value="Ribosomal_uL1/biogenesis"/>
</dbReference>
<dbReference type="InterPro" id="IPR016095">
    <property type="entry name" value="Ribosomal_uL1_3-a/b-sand"/>
</dbReference>
<dbReference type="InterPro" id="IPR023673">
    <property type="entry name" value="Ribosomal_uL1_CS"/>
</dbReference>
<dbReference type="NCBIfam" id="TIGR01169">
    <property type="entry name" value="rplA_bact"/>
    <property type="match status" value="1"/>
</dbReference>
<dbReference type="PANTHER" id="PTHR36427">
    <property type="entry name" value="54S RIBOSOMAL PROTEIN L1, MITOCHONDRIAL"/>
    <property type="match status" value="1"/>
</dbReference>
<dbReference type="PANTHER" id="PTHR36427:SF3">
    <property type="entry name" value="LARGE RIBOSOMAL SUBUNIT PROTEIN UL1M"/>
    <property type="match status" value="1"/>
</dbReference>
<dbReference type="Pfam" id="PF00687">
    <property type="entry name" value="Ribosomal_L1"/>
    <property type="match status" value="1"/>
</dbReference>
<dbReference type="PIRSF" id="PIRSF002155">
    <property type="entry name" value="Ribosomal_L1"/>
    <property type="match status" value="1"/>
</dbReference>
<dbReference type="SUPFAM" id="SSF56808">
    <property type="entry name" value="Ribosomal protein L1"/>
    <property type="match status" value="1"/>
</dbReference>
<dbReference type="PROSITE" id="PS01199">
    <property type="entry name" value="RIBOSOMAL_L1"/>
    <property type="match status" value="1"/>
</dbReference>